<name>DRL44_ARATH</name>
<keyword id="KW-0025">Alternative splicing</keyword>
<keyword id="KW-0067">ATP-binding</keyword>
<keyword id="KW-0175">Coiled coil</keyword>
<keyword id="KW-0433">Leucine-rich repeat</keyword>
<keyword id="KW-0547">Nucleotide-binding</keyword>
<keyword id="KW-0611">Plant defense</keyword>
<keyword id="KW-1185">Reference proteome</keyword>
<keyword id="KW-0677">Repeat</keyword>
<organism>
    <name type="scientific">Arabidopsis thaliana</name>
    <name type="common">Mouse-ear cress</name>
    <dbReference type="NCBI Taxonomy" id="3702"/>
    <lineage>
        <taxon>Eukaryota</taxon>
        <taxon>Viridiplantae</taxon>
        <taxon>Streptophyta</taxon>
        <taxon>Embryophyta</taxon>
        <taxon>Tracheophyta</taxon>
        <taxon>Spermatophyta</taxon>
        <taxon>Magnoliopsida</taxon>
        <taxon>eudicotyledons</taxon>
        <taxon>Gunneridae</taxon>
        <taxon>Pentapetalae</taxon>
        <taxon>rosids</taxon>
        <taxon>malvids</taxon>
        <taxon>Brassicales</taxon>
        <taxon>Brassicaceae</taxon>
        <taxon>Camelineae</taxon>
        <taxon>Arabidopsis</taxon>
    </lineage>
</organism>
<accession>P0DI16</accession>
<accession>Q8W3J8</accession>
<accession>Q8W3J9</accession>
<accession>Q94HW5</accession>
<accession>Q9SLU5</accession>
<accession>Q9SLU6</accession>
<protein>
    <recommendedName>
        <fullName>Probable disease resistance protein RDL5</fullName>
    </recommendedName>
</protein>
<sequence length="1017" mass="117047">MAGELISFGIQNLWNLLSQECELFQGVEDQVTELKRDLNMLSSFLKDANAKKHTSAVVKNCVEEIKEIIYDGEDTIETFVLEQNLGKTSGIKKSIRRLACIIPDRRRYALGIGGLSNRISKVIRDMQSFGVQQAIVDGGYKQPQGDKQREMRQKFSKDDDSDFVGLEANVKKLVGYLVDEANVQVVSITGMGGLGKTTLAKQVFNHEDVKHQFDGLSWVCVSQDFTRMNVWQKILRDLKPKEEEKKIMEMTQDTLQGELIRLLETSKSLIVLDDIWEKEDWELIKPIFPPTKGWKVLLTSRNESVAMRRNTSYINFKPECLTTEDSWTLFQRIALPMKDAAEFKIDEEKEELGKLMIKHCGGLPLAIRVLGGMLAEKYTSHDWRRLSENIGSHLVGGRTNFNDDNNNTCNNVLSLSFEELPSYLKHCFLYLAHFPEDYEIKVENLSYYWAAEGIFQPRHYDGETIRDVGDVYIEELVRRNMVISERDVKTSRFETCHLHDMMREVCLLKAKEENFLQITSSRPSTANLQSTVTSRRFVYQYPTTLHVEKDINNPKLRALVVVTLGSWNLAGSSFTRLELLRVLDLIEVKIKGGKLASCIGKLIHLRYLSLEYAEVTHIPYSLGNLKLLIYLNLASFGRSTFVPNVLMGMQELRYLALPSDMGRKTKLELSNLVKLETLENFSTENSSLEDLCGMVRLSTLNIKLIEETSLETLAASIGGLKYLEKLEIYDHGSEMRTKEAGIVFDFVHLKRLWLKLYMPRLSTEQHFPSHLTTLYLESCRLEEDPMPILEKLLQLKELELGFESFSGKKMVCSSGGFPQLQRLSLLKLEEWEDWKVEESSMPLLRTLDIQVCRKLKQLPDEHLPSHLTSISLFFCCLEKDPLPTLGRLVYLKELQLGFRTFSGRIMVCSGGGFPQLQKLSIYRLEEWEEWIVEQGSMPFLHTLYIDDCPKLKKLPDGLQFIYSLKNLKISERWKERLSEGGEEYYKVQHIPSVEFYHRVLHIFRSVGGDITGRLLMR</sequence>
<reference key="1">
    <citation type="journal article" date="1999" name="Gene">
        <title>Isolation and analysis of cDNA within a 300 kb Arabidopsis thaliana genomic region located around the 100 map unit of chromosome 1.</title>
        <authorList>
            <person name="Kato A."/>
            <person name="Suzuki M."/>
            <person name="Kuwahara A."/>
            <person name="Ooe H."/>
            <person name="Higano-Inaba K."/>
            <person name="Komeda Y."/>
        </authorList>
    </citation>
    <scope>NUCLEOTIDE SEQUENCE [GENOMIC DNA] (ISOFORM 2)</scope>
    <source>
        <strain>cv. Columbia</strain>
    </source>
</reference>
<reference key="2">
    <citation type="journal article" date="2000" name="Nature">
        <title>Sequence and analysis of chromosome 1 of the plant Arabidopsis thaliana.</title>
        <authorList>
            <person name="Theologis A."/>
            <person name="Ecker J.R."/>
            <person name="Palm C.J."/>
            <person name="Federspiel N.A."/>
            <person name="Kaul S."/>
            <person name="White O."/>
            <person name="Alonso J."/>
            <person name="Altafi H."/>
            <person name="Araujo R."/>
            <person name="Bowman C.L."/>
            <person name="Brooks S.Y."/>
            <person name="Buehler E."/>
            <person name="Chan A."/>
            <person name="Chao Q."/>
            <person name="Chen H."/>
            <person name="Cheuk R.F."/>
            <person name="Chin C.W."/>
            <person name="Chung M.K."/>
            <person name="Conn L."/>
            <person name="Conway A.B."/>
            <person name="Conway A.R."/>
            <person name="Creasy T.H."/>
            <person name="Dewar K."/>
            <person name="Dunn P."/>
            <person name="Etgu P."/>
            <person name="Feldblyum T.V."/>
            <person name="Feng J.-D."/>
            <person name="Fong B."/>
            <person name="Fujii C.Y."/>
            <person name="Gill J.E."/>
            <person name="Goldsmith A.D."/>
            <person name="Haas B."/>
            <person name="Hansen N.F."/>
            <person name="Hughes B."/>
            <person name="Huizar L."/>
            <person name="Hunter J.L."/>
            <person name="Jenkins J."/>
            <person name="Johnson-Hopson C."/>
            <person name="Khan S."/>
            <person name="Khaykin E."/>
            <person name="Kim C.J."/>
            <person name="Koo H.L."/>
            <person name="Kremenetskaia I."/>
            <person name="Kurtz D.B."/>
            <person name="Kwan A."/>
            <person name="Lam B."/>
            <person name="Langin-Hooper S."/>
            <person name="Lee A."/>
            <person name="Lee J.M."/>
            <person name="Lenz C.A."/>
            <person name="Li J.H."/>
            <person name="Li Y.-P."/>
            <person name="Lin X."/>
            <person name="Liu S.X."/>
            <person name="Liu Z.A."/>
            <person name="Luros J.S."/>
            <person name="Maiti R."/>
            <person name="Marziali A."/>
            <person name="Militscher J."/>
            <person name="Miranda M."/>
            <person name="Nguyen M."/>
            <person name="Nierman W.C."/>
            <person name="Osborne B.I."/>
            <person name="Pai G."/>
            <person name="Peterson J."/>
            <person name="Pham P.K."/>
            <person name="Rizzo M."/>
            <person name="Rooney T."/>
            <person name="Rowley D."/>
            <person name="Sakano H."/>
            <person name="Salzberg S.L."/>
            <person name="Schwartz J.R."/>
            <person name="Shinn P."/>
            <person name="Southwick A.M."/>
            <person name="Sun H."/>
            <person name="Tallon L.J."/>
            <person name="Tambunga G."/>
            <person name="Toriumi M.J."/>
            <person name="Town C.D."/>
            <person name="Utterback T."/>
            <person name="Van Aken S."/>
            <person name="Vaysberg M."/>
            <person name="Vysotskaia V.S."/>
            <person name="Walker M."/>
            <person name="Wu D."/>
            <person name="Yu G."/>
            <person name="Fraser C.M."/>
            <person name="Venter J.C."/>
            <person name="Davis R.W."/>
        </authorList>
    </citation>
    <scope>NUCLEOTIDE SEQUENCE [LARGE SCALE GENOMIC DNA]</scope>
    <source>
        <strain>cv. Columbia</strain>
    </source>
</reference>
<reference key="3">
    <citation type="journal article" date="2017" name="Plant J.">
        <title>Araport11: a complete reannotation of the Arabidopsis thaliana reference genome.</title>
        <authorList>
            <person name="Cheng C.Y."/>
            <person name="Krishnakumar V."/>
            <person name="Chan A.P."/>
            <person name="Thibaud-Nissen F."/>
            <person name="Schobel S."/>
            <person name="Town C.D."/>
        </authorList>
    </citation>
    <scope>GENOME REANNOTATION</scope>
    <source>
        <strain>cv. Columbia</strain>
    </source>
</reference>
<dbReference type="EMBL" id="AB078516">
    <property type="protein sequence ID" value="BAB84017.1"/>
    <property type="molecule type" value="Genomic_DNA"/>
</dbReference>
<dbReference type="EMBL" id="AC027036">
    <property type="protein sequence ID" value="AAK62797.1"/>
    <property type="status" value="ALT_SEQ"/>
    <property type="molecule type" value="Genomic_DNA"/>
</dbReference>
<dbReference type="EMBL" id="CP002684">
    <property type="protein sequence ID" value="AEE33570.1"/>
    <property type="molecule type" value="Genomic_DNA"/>
</dbReference>
<dbReference type="EMBL" id="CP002684">
    <property type="protein sequence ID" value="ANM60642.1"/>
    <property type="molecule type" value="Genomic_DNA"/>
</dbReference>
<dbReference type="RefSeq" id="NP_001117515.1">
    <molecule id="P0DI16-2"/>
    <property type="nucleotide sequence ID" value="NM_001124043.2"/>
</dbReference>
<dbReference type="RefSeq" id="NP_001322914.1">
    <molecule id="P0DI16-1"/>
    <property type="nucleotide sequence ID" value="NM_001333846.1"/>
</dbReference>
<dbReference type="RefSeq" id="NP_176151.2">
    <molecule id="P0DI16-2"/>
    <property type="nucleotide sequence ID" value="NM_104635.3"/>
</dbReference>
<dbReference type="RefSeq" id="NP_683446.1">
    <molecule id="P0DI16-1"/>
    <property type="nucleotide sequence ID" value="NM_148605.4"/>
</dbReference>
<dbReference type="SMR" id="P0DI16"/>
<dbReference type="STRING" id="3702.P0DI16"/>
<dbReference type="EnsemblPlants" id="AT1G58807.1">
    <molecule id="P0DI16-1"/>
    <property type="protein sequence ID" value="AT1G58807.1"/>
    <property type="gene ID" value="AT1G58807"/>
</dbReference>
<dbReference type="EnsemblPlants" id="AT1G58807.2">
    <property type="protein sequence ID" value="AT1G58807.2"/>
    <property type="gene ID" value="AT1G58807"/>
</dbReference>
<dbReference type="EnsemblPlants" id="AT1G59124.1">
    <property type="protein sequence ID" value="AT1G59124.1"/>
    <property type="gene ID" value="AT1G59124"/>
</dbReference>
<dbReference type="EnsemblPlants" id="AT1G59124.2">
    <molecule id="P0DI16-1"/>
    <property type="protein sequence ID" value="AT1G59124.2"/>
    <property type="gene ID" value="AT1G59124"/>
</dbReference>
<dbReference type="GeneID" id="842232"/>
<dbReference type="Gramene" id="AT1G58807.1">
    <molecule id="P0DI16-1"/>
    <property type="protein sequence ID" value="AT1G58807.1"/>
    <property type="gene ID" value="AT1G58807"/>
</dbReference>
<dbReference type="Gramene" id="AT1G58807.2">
    <property type="protein sequence ID" value="AT1G58807.2"/>
    <property type="gene ID" value="AT1G58807"/>
</dbReference>
<dbReference type="Gramene" id="AT1G59124.1">
    <property type="protein sequence ID" value="AT1G59124.1"/>
    <property type="gene ID" value="AT1G59124"/>
</dbReference>
<dbReference type="Gramene" id="AT1G59124.2">
    <molecule id="P0DI16-1"/>
    <property type="protein sequence ID" value="AT1G59124.2"/>
    <property type="gene ID" value="AT1G59124"/>
</dbReference>
<dbReference type="KEGG" id="ath:AT1G58807"/>
<dbReference type="KEGG" id="ath:AT1G59124"/>
<dbReference type="Araport" id="AT1G59124"/>
<dbReference type="TAIR" id="AT1G59124"/>
<dbReference type="HOGENOM" id="CLU_000837_35_5_1"/>
<dbReference type="InParanoid" id="P0DI16"/>
<dbReference type="OMA" id="NFRSKEQ"/>
<dbReference type="PRO" id="PR:P0DI16"/>
<dbReference type="Proteomes" id="UP000006548">
    <property type="component" value="Chromosome 1"/>
</dbReference>
<dbReference type="ExpressionAtlas" id="P0DI16">
    <property type="expression patterns" value="baseline and differential"/>
</dbReference>
<dbReference type="GO" id="GO:0043531">
    <property type="term" value="F:ADP binding"/>
    <property type="evidence" value="ECO:0007669"/>
    <property type="project" value="InterPro"/>
</dbReference>
<dbReference type="GO" id="GO:0005524">
    <property type="term" value="F:ATP binding"/>
    <property type="evidence" value="ECO:0007669"/>
    <property type="project" value="UniProtKB-KW"/>
</dbReference>
<dbReference type="GO" id="GO:0098542">
    <property type="term" value="P:defense response to other organism"/>
    <property type="evidence" value="ECO:0007669"/>
    <property type="project" value="UniProtKB-ARBA"/>
</dbReference>
<dbReference type="CDD" id="cd14798">
    <property type="entry name" value="RX-CC_like"/>
    <property type="match status" value="1"/>
</dbReference>
<dbReference type="FunFam" id="3.40.50.300:FF:001091">
    <property type="entry name" value="Probable disease resistance protein At1g61300"/>
    <property type="match status" value="1"/>
</dbReference>
<dbReference type="FunFam" id="1.10.10.10:FF:000322">
    <property type="entry name" value="Probable disease resistance protein At1g63360"/>
    <property type="match status" value="1"/>
</dbReference>
<dbReference type="FunFam" id="1.10.8.430:FF:000003">
    <property type="entry name" value="Probable disease resistance protein At5g66910"/>
    <property type="match status" value="1"/>
</dbReference>
<dbReference type="Gene3D" id="1.20.5.4130">
    <property type="match status" value="1"/>
</dbReference>
<dbReference type="Gene3D" id="1.10.8.430">
    <property type="entry name" value="Helical domain of apoptotic protease-activating factors"/>
    <property type="match status" value="1"/>
</dbReference>
<dbReference type="Gene3D" id="3.40.50.300">
    <property type="entry name" value="P-loop containing nucleotide triphosphate hydrolases"/>
    <property type="match status" value="1"/>
</dbReference>
<dbReference type="Gene3D" id="3.80.10.10">
    <property type="entry name" value="Ribonuclease Inhibitor"/>
    <property type="match status" value="3"/>
</dbReference>
<dbReference type="Gene3D" id="1.10.10.10">
    <property type="entry name" value="Winged helix-like DNA-binding domain superfamily/Winged helix DNA-binding domain"/>
    <property type="match status" value="1"/>
</dbReference>
<dbReference type="InterPro" id="IPR042197">
    <property type="entry name" value="Apaf_helical"/>
</dbReference>
<dbReference type="InterPro" id="IPR032675">
    <property type="entry name" value="LRR_dom_sf"/>
</dbReference>
<dbReference type="InterPro" id="IPR055414">
    <property type="entry name" value="LRR_R13L4/SHOC2-like"/>
</dbReference>
<dbReference type="InterPro" id="IPR002182">
    <property type="entry name" value="NB-ARC"/>
</dbReference>
<dbReference type="InterPro" id="IPR027417">
    <property type="entry name" value="P-loop_NTPase"/>
</dbReference>
<dbReference type="InterPro" id="IPR038005">
    <property type="entry name" value="RX-like_CC"/>
</dbReference>
<dbReference type="InterPro" id="IPR041118">
    <property type="entry name" value="Rx_N"/>
</dbReference>
<dbReference type="InterPro" id="IPR036388">
    <property type="entry name" value="WH-like_DNA-bd_sf"/>
</dbReference>
<dbReference type="PANTHER" id="PTHR36766:SF40">
    <property type="entry name" value="DISEASE RESISTANCE PROTEIN RGA3"/>
    <property type="match status" value="1"/>
</dbReference>
<dbReference type="PANTHER" id="PTHR36766">
    <property type="entry name" value="PLANT BROAD-SPECTRUM MILDEW RESISTANCE PROTEIN RPW8"/>
    <property type="match status" value="1"/>
</dbReference>
<dbReference type="Pfam" id="PF23598">
    <property type="entry name" value="LRR_14"/>
    <property type="match status" value="1"/>
</dbReference>
<dbReference type="Pfam" id="PF00931">
    <property type="entry name" value="NB-ARC"/>
    <property type="match status" value="1"/>
</dbReference>
<dbReference type="Pfam" id="PF18052">
    <property type="entry name" value="Rx_N"/>
    <property type="match status" value="1"/>
</dbReference>
<dbReference type="Pfam" id="PF23559">
    <property type="entry name" value="WH_DRP"/>
    <property type="match status" value="1"/>
</dbReference>
<dbReference type="PRINTS" id="PR00364">
    <property type="entry name" value="DISEASERSIST"/>
</dbReference>
<dbReference type="SUPFAM" id="SSF52058">
    <property type="entry name" value="L domain-like"/>
    <property type="match status" value="2"/>
</dbReference>
<dbReference type="SUPFAM" id="SSF52540">
    <property type="entry name" value="P-loop containing nucleoside triphosphate hydrolases"/>
    <property type="match status" value="1"/>
</dbReference>
<feature type="chain" id="PRO_0000417428" description="Probable disease resistance protein RDL5">
    <location>
        <begin position="1"/>
        <end position="1017"/>
    </location>
</feature>
<feature type="domain" description="NB-ARC">
    <location>
        <begin position="147"/>
        <end position="460"/>
    </location>
</feature>
<feature type="repeat" description="LRR 1">
    <location>
        <begin position="602"/>
        <end position="627"/>
    </location>
</feature>
<feature type="repeat" description="LRR 2">
    <location>
        <begin position="649"/>
        <end position="674"/>
    </location>
</feature>
<feature type="repeat" description="LRR 3">
    <location>
        <begin position="675"/>
        <end position="699"/>
    </location>
</feature>
<feature type="repeat" description="LRR 4">
    <location>
        <begin position="768"/>
        <end position="791"/>
    </location>
</feature>
<feature type="repeat" description="LRR 5">
    <location>
        <begin position="792"/>
        <end position="819"/>
    </location>
</feature>
<feature type="repeat" description="LRR 6">
    <location>
        <begin position="841"/>
        <end position="865"/>
    </location>
</feature>
<feature type="repeat" description="LRR 7">
    <location>
        <begin position="937"/>
        <end position="962"/>
    </location>
</feature>
<feature type="coiled-coil region" evidence="1">
    <location>
        <begin position="25"/>
        <end position="52"/>
    </location>
</feature>
<feature type="binding site" evidence="1">
    <location>
        <begin position="190"/>
        <end position="197"/>
    </location>
    <ligand>
        <name>ATP</name>
        <dbReference type="ChEBI" id="CHEBI:30616"/>
    </ligand>
</feature>
<feature type="splice variant" id="VSP_043691" description="In isoform 2." evidence="2">
    <original>VCRKL</original>
    <variation>IHCRL</variation>
    <location>
        <begin position="851"/>
        <end position="855"/>
    </location>
</feature>
<feature type="splice variant" id="VSP_043692" description="In isoform 2." evidence="2">
    <location>
        <begin position="856"/>
        <end position="1017"/>
    </location>
</feature>
<comment type="function">
    <text>Potential disease resistance protein.</text>
</comment>
<comment type="alternative products">
    <event type="alternative splicing"/>
    <isoform>
        <id>P0DI16-1</id>
        <name>1</name>
        <sequence type="displayed"/>
    </isoform>
    <isoform>
        <id>P0DI16-2</id>
        <name>2</name>
        <sequence type="described" ref="VSP_043691 VSP_043692"/>
    </isoform>
</comment>
<comment type="similarity">
    <text evidence="2">Belongs to the disease resistance NB-LRR family.</text>
</comment>
<comment type="sequence caution" evidence="2">
    <conflict type="erroneous gene model prediction">
        <sequence resource="EMBL-CDS" id="AAK62797"/>
    </conflict>
</comment>
<comment type="online information" name="NIB-LRRS">
    <link uri="http://niblrrs.ucdavis.edu"/>
    <text>Functional and comparative genomics of disease resistance gene homologs</text>
</comment>
<evidence type="ECO:0000255" key="1"/>
<evidence type="ECO:0000305" key="2"/>
<gene>
    <name type="primary">RDL5</name>
    <name type="ordered locus">At1g59124</name>
    <name type="ORF">T4M14.5</name>
</gene>
<proteinExistence type="inferred from homology"/>